<reference key="1">
    <citation type="journal article" date="2003" name="Plant Syst. Evol.">
        <title>The chloroplast genome of the 'basal' angiosperm Calycanthus fertilis -- structural and phylogenetic analyses.</title>
        <authorList>
            <person name="Goremykin V.V."/>
            <person name="Hirsch-Ernst K.I."/>
            <person name="Woelfl S."/>
            <person name="Hellwig F.H."/>
        </authorList>
    </citation>
    <scope>NUCLEOTIDE SEQUENCE [LARGE SCALE GENOMIC DNA]</scope>
</reference>
<protein>
    <recommendedName>
        <fullName evidence="1">NAD(P)H-quinone oxidoreductase subunit 3, chloroplastic</fullName>
        <ecNumber evidence="1">7.1.1.-</ecNumber>
    </recommendedName>
    <alternativeName>
        <fullName evidence="1">NAD(P)H dehydrogenase subunit 3</fullName>
    </alternativeName>
    <alternativeName>
        <fullName evidence="1">NADH-plastoquinone oxidoreductase subunit 3</fullName>
    </alternativeName>
</protein>
<comment type="function">
    <text evidence="1">NDH shuttles electrons from NAD(P)H:plastoquinone, via FMN and iron-sulfur (Fe-S) centers, to quinones in the photosynthetic chain and possibly in a chloroplast respiratory chain. The immediate electron acceptor for the enzyme in this species is believed to be plastoquinone. Couples the redox reaction to proton translocation, and thus conserves the redox energy in a proton gradient.</text>
</comment>
<comment type="catalytic activity">
    <reaction evidence="1">
        <text>a plastoquinone + NADH + (n+1) H(+)(in) = a plastoquinol + NAD(+) + n H(+)(out)</text>
        <dbReference type="Rhea" id="RHEA:42608"/>
        <dbReference type="Rhea" id="RHEA-COMP:9561"/>
        <dbReference type="Rhea" id="RHEA-COMP:9562"/>
        <dbReference type="ChEBI" id="CHEBI:15378"/>
        <dbReference type="ChEBI" id="CHEBI:17757"/>
        <dbReference type="ChEBI" id="CHEBI:57540"/>
        <dbReference type="ChEBI" id="CHEBI:57945"/>
        <dbReference type="ChEBI" id="CHEBI:62192"/>
    </reaction>
</comment>
<comment type="catalytic activity">
    <reaction evidence="1">
        <text>a plastoquinone + NADPH + (n+1) H(+)(in) = a plastoquinol + NADP(+) + n H(+)(out)</text>
        <dbReference type="Rhea" id="RHEA:42612"/>
        <dbReference type="Rhea" id="RHEA-COMP:9561"/>
        <dbReference type="Rhea" id="RHEA-COMP:9562"/>
        <dbReference type="ChEBI" id="CHEBI:15378"/>
        <dbReference type="ChEBI" id="CHEBI:17757"/>
        <dbReference type="ChEBI" id="CHEBI:57783"/>
        <dbReference type="ChEBI" id="CHEBI:58349"/>
        <dbReference type="ChEBI" id="CHEBI:62192"/>
    </reaction>
</comment>
<comment type="subunit">
    <text evidence="1">NDH is composed of at least 16 different subunits, 5 of which are encoded in the nucleus.</text>
</comment>
<comment type="subcellular location">
    <subcellularLocation>
        <location evidence="1">Plastid</location>
        <location evidence="1">Chloroplast thylakoid membrane</location>
        <topology evidence="1">Multi-pass membrane protein</topology>
    </subcellularLocation>
</comment>
<comment type="similarity">
    <text evidence="1">Belongs to the complex I subunit 3 family.</text>
</comment>
<evidence type="ECO:0000255" key="1">
    <source>
        <dbReference type="HAMAP-Rule" id="MF_01394"/>
    </source>
</evidence>
<name>NU3C_CALFG</name>
<organism>
    <name type="scientific">Calycanthus floridus var. glaucus</name>
    <name type="common">Eastern sweetshrub</name>
    <name type="synonym">Calycanthus fertilis var. ferax</name>
    <dbReference type="NCBI Taxonomy" id="212734"/>
    <lineage>
        <taxon>Eukaryota</taxon>
        <taxon>Viridiplantae</taxon>
        <taxon>Streptophyta</taxon>
        <taxon>Embryophyta</taxon>
        <taxon>Tracheophyta</taxon>
        <taxon>Spermatophyta</taxon>
        <taxon>Magnoliopsida</taxon>
        <taxon>Magnoliidae</taxon>
        <taxon>Laurales</taxon>
        <taxon>Calycanthaceae</taxon>
        <taxon>Calycanthus</taxon>
    </lineage>
</organism>
<keyword id="KW-0150">Chloroplast</keyword>
<keyword id="KW-0472">Membrane</keyword>
<keyword id="KW-0520">NAD</keyword>
<keyword id="KW-0521">NADP</keyword>
<keyword id="KW-0934">Plastid</keyword>
<keyword id="KW-0618">Plastoquinone</keyword>
<keyword id="KW-0874">Quinone</keyword>
<keyword id="KW-0793">Thylakoid</keyword>
<keyword id="KW-1278">Translocase</keyword>
<keyword id="KW-0812">Transmembrane</keyword>
<keyword id="KW-1133">Transmembrane helix</keyword>
<keyword id="KW-0813">Transport</keyword>
<geneLocation type="chloroplast"/>
<dbReference type="EC" id="7.1.1.-" evidence="1"/>
<dbReference type="EMBL" id="AJ428413">
    <property type="protein sequence ID" value="CAD28726.1"/>
    <property type="molecule type" value="Genomic_DNA"/>
</dbReference>
<dbReference type="RefSeq" id="NP_862759.1">
    <property type="nucleotide sequence ID" value="NC_004993.1"/>
</dbReference>
<dbReference type="SMR" id="Q7YJW7"/>
<dbReference type="GeneID" id="2597987"/>
<dbReference type="GO" id="GO:0009535">
    <property type="term" value="C:chloroplast thylakoid membrane"/>
    <property type="evidence" value="ECO:0007669"/>
    <property type="project" value="UniProtKB-SubCell"/>
</dbReference>
<dbReference type="GO" id="GO:0030964">
    <property type="term" value="C:NADH dehydrogenase complex"/>
    <property type="evidence" value="ECO:0007669"/>
    <property type="project" value="TreeGrafter"/>
</dbReference>
<dbReference type="GO" id="GO:0008137">
    <property type="term" value="F:NADH dehydrogenase (ubiquinone) activity"/>
    <property type="evidence" value="ECO:0007669"/>
    <property type="project" value="InterPro"/>
</dbReference>
<dbReference type="GO" id="GO:0048038">
    <property type="term" value="F:quinone binding"/>
    <property type="evidence" value="ECO:0007669"/>
    <property type="project" value="UniProtKB-KW"/>
</dbReference>
<dbReference type="GO" id="GO:0019684">
    <property type="term" value="P:photosynthesis, light reaction"/>
    <property type="evidence" value="ECO:0007669"/>
    <property type="project" value="UniProtKB-UniRule"/>
</dbReference>
<dbReference type="FunFam" id="1.20.58.1610:FF:000001">
    <property type="entry name" value="NAD(P)H-quinone oxidoreductase subunit 3, chloroplastic"/>
    <property type="match status" value="1"/>
</dbReference>
<dbReference type="Gene3D" id="1.20.58.1610">
    <property type="entry name" value="NADH:ubiquinone/plastoquinone oxidoreductase, chain 3"/>
    <property type="match status" value="1"/>
</dbReference>
<dbReference type="HAMAP" id="MF_01394">
    <property type="entry name" value="NDH1_NuoA"/>
    <property type="match status" value="1"/>
</dbReference>
<dbReference type="InterPro" id="IPR023043">
    <property type="entry name" value="NAD(P)H_OxRDtase_bac/plastid"/>
</dbReference>
<dbReference type="InterPro" id="IPR000440">
    <property type="entry name" value="NADH_UbQ/plastoQ_OxRdtase_su3"/>
</dbReference>
<dbReference type="InterPro" id="IPR038430">
    <property type="entry name" value="NDAH_ubi_oxred_su3_sf"/>
</dbReference>
<dbReference type="PANTHER" id="PTHR11058">
    <property type="entry name" value="NADH-UBIQUINONE OXIDOREDUCTASE CHAIN 3"/>
    <property type="match status" value="1"/>
</dbReference>
<dbReference type="PANTHER" id="PTHR11058:SF9">
    <property type="entry name" value="NADH-UBIQUINONE OXIDOREDUCTASE CHAIN 3"/>
    <property type="match status" value="1"/>
</dbReference>
<dbReference type="Pfam" id="PF00507">
    <property type="entry name" value="Oxidored_q4"/>
    <property type="match status" value="1"/>
</dbReference>
<sequence>MFLLHEYDIFWAFLIISSVIPILAFLISGVLAPIREGPEKLSSYESGIEPMGDAWLQFRIRYYMFALVFVVFDVETVFLYPWAMSFDVLGVSVFIEALIFVLIPIVGSVYAWRKGALEWS</sequence>
<gene>
    <name evidence="1" type="primary">ndhC</name>
</gene>
<proteinExistence type="inferred from homology"/>
<accession>Q7YJW7</accession>
<feature type="chain" id="PRO_0000362813" description="NAD(P)H-quinone oxidoreductase subunit 3, chloroplastic">
    <location>
        <begin position="1"/>
        <end position="120"/>
    </location>
</feature>
<feature type="transmembrane region" description="Helical" evidence="1">
    <location>
        <begin position="9"/>
        <end position="29"/>
    </location>
</feature>
<feature type="transmembrane region" description="Helical" evidence="1">
    <location>
        <begin position="64"/>
        <end position="84"/>
    </location>
</feature>
<feature type="transmembrane region" description="Helical" evidence="1">
    <location>
        <begin position="88"/>
        <end position="108"/>
    </location>
</feature>